<keyword id="KW-0053">Apoptosis</keyword>
<keyword id="KW-0067">ATP-binding</keyword>
<keyword id="KW-1003">Cell membrane</keyword>
<keyword id="KW-1015">Disulfide bond</keyword>
<keyword id="KW-0227">DNA damage</keyword>
<keyword id="KW-0234">DNA repair</keyword>
<keyword id="KW-0967">Endosome</keyword>
<keyword id="KW-0472">Membrane</keyword>
<keyword id="KW-0547">Nucleotide-binding</keyword>
<keyword id="KW-0597">Phosphoprotein</keyword>
<keyword id="KW-1185">Reference proteome</keyword>
<keyword id="KW-0808">Transferase</keyword>
<keyword id="KW-0833">Ubl conjugation pathway</keyword>
<organism>
    <name type="scientific">Pongo abelii</name>
    <name type="common">Sumatran orangutan</name>
    <name type="synonym">Pongo pygmaeus abelii</name>
    <dbReference type="NCBI Taxonomy" id="9601"/>
    <lineage>
        <taxon>Eukaryota</taxon>
        <taxon>Metazoa</taxon>
        <taxon>Chordata</taxon>
        <taxon>Craniata</taxon>
        <taxon>Vertebrata</taxon>
        <taxon>Euteleostomi</taxon>
        <taxon>Mammalia</taxon>
        <taxon>Eutheria</taxon>
        <taxon>Euarchontoglires</taxon>
        <taxon>Primates</taxon>
        <taxon>Haplorrhini</taxon>
        <taxon>Catarrhini</taxon>
        <taxon>Hominidae</taxon>
        <taxon>Pongo</taxon>
    </lineage>
</organism>
<proteinExistence type="evidence at transcript level"/>
<dbReference type="EC" id="2.3.2.23"/>
<dbReference type="EC" id="2.3.2.24"/>
<dbReference type="EMBL" id="CR861134">
    <property type="protein sequence ID" value="CAH93209.1"/>
    <property type="molecule type" value="mRNA"/>
</dbReference>
<dbReference type="RefSeq" id="XP_002815054.1">
    <property type="nucleotide sequence ID" value="XM_002815008.3"/>
</dbReference>
<dbReference type="RefSeq" id="XP_002815056.1">
    <property type="nucleotide sequence ID" value="XM_002815010.3"/>
</dbReference>
<dbReference type="RefSeq" id="XP_003776546.1">
    <property type="nucleotide sequence ID" value="XM_003776498.2"/>
</dbReference>
<dbReference type="RefSeq" id="XP_003776549.1">
    <property type="nucleotide sequence ID" value="XM_003776501.2"/>
</dbReference>
<dbReference type="RefSeq" id="XP_009238501.1">
    <property type="nucleotide sequence ID" value="XM_009240226.1"/>
</dbReference>
<dbReference type="RefSeq" id="XP_024101542.1">
    <property type="nucleotide sequence ID" value="XM_024245774.3"/>
</dbReference>
<dbReference type="SMR" id="Q5R4V7"/>
<dbReference type="FunCoup" id="Q5R4V7">
    <property type="interactions" value="3959"/>
</dbReference>
<dbReference type="STRING" id="9601.ENSPPYP00000016715"/>
<dbReference type="Ensembl" id="ENSPPYT00000057125.1">
    <property type="protein sequence ID" value="ENSPPYP00000037067.1"/>
    <property type="gene ID" value="ENSPPYG00000014967.3"/>
</dbReference>
<dbReference type="GeneID" id="100462331"/>
<dbReference type="eggNOG" id="KOG0417">
    <property type="taxonomic scope" value="Eukaryota"/>
</dbReference>
<dbReference type="GeneTree" id="ENSGT00940000153169"/>
<dbReference type="InParanoid" id="Q5R4V7"/>
<dbReference type="OrthoDB" id="7851174at2759"/>
<dbReference type="UniPathway" id="UPA00143"/>
<dbReference type="Proteomes" id="UP000001595">
    <property type="component" value="Chromosome 4"/>
</dbReference>
<dbReference type="GO" id="GO:0010008">
    <property type="term" value="C:endosome membrane"/>
    <property type="evidence" value="ECO:0007669"/>
    <property type="project" value="UniProtKB-SubCell"/>
</dbReference>
<dbReference type="GO" id="GO:0005886">
    <property type="term" value="C:plasma membrane"/>
    <property type="evidence" value="ECO:0007669"/>
    <property type="project" value="UniProtKB-SubCell"/>
</dbReference>
<dbReference type="GO" id="GO:0005524">
    <property type="term" value="F:ATP binding"/>
    <property type="evidence" value="ECO:0007669"/>
    <property type="project" value="UniProtKB-KW"/>
</dbReference>
<dbReference type="GO" id="GO:0061631">
    <property type="term" value="F:ubiquitin conjugating enzyme activity"/>
    <property type="evidence" value="ECO:0000250"/>
    <property type="project" value="UniProtKB"/>
</dbReference>
<dbReference type="GO" id="GO:0004842">
    <property type="term" value="F:ubiquitin-protein transferase activity"/>
    <property type="evidence" value="ECO:0000250"/>
    <property type="project" value="UniProtKB"/>
</dbReference>
<dbReference type="GO" id="GO:0006915">
    <property type="term" value="P:apoptotic process"/>
    <property type="evidence" value="ECO:0007669"/>
    <property type="project" value="UniProtKB-KW"/>
</dbReference>
<dbReference type="GO" id="GO:0006281">
    <property type="term" value="P:DNA repair"/>
    <property type="evidence" value="ECO:0007669"/>
    <property type="project" value="UniProtKB-KW"/>
</dbReference>
<dbReference type="GO" id="GO:0043161">
    <property type="term" value="P:proteasome-mediated ubiquitin-dependent protein catabolic process"/>
    <property type="evidence" value="ECO:0000250"/>
    <property type="project" value="UniProtKB"/>
</dbReference>
<dbReference type="GO" id="GO:0070979">
    <property type="term" value="P:protein K11-linked ubiquitination"/>
    <property type="evidence" value="ECO:0000250"/>
    <property type="project" value="UniProtKB"/>
</dbReference>
<dbReference type="GO" id="GO:0070936">
    <property type="term" value="P:protein K48-linked ubiquitination"/>
    <property type="evidence" value="ECO:0000250"/>
    <property type="project" value="UniProtKB"/>
</dbReference>
<dbReference type="GO" id="GO:0085020">
    <property type="term" value="P:protein K6-linked ubiquitination"/>
    <property type="evidence" value="ECO:0000250"/>
    <property type="project" value="UniProtKB"/>
</dbReference>
<dbReference type="GO" id="GO:0000209">
    <property type="term" value="P:protein polyubiquitination"/>
    <property type="evidence" value="ECO:0000250"/>
    <property type="project" value="UniProtKB"/>
</dbReference>
<dbReference type="CDD" id="cd23792">
    <property type="entry name" value="UBCc_UBE2D"/>
    <property type="match status" value="1"/>
</dbReference>
<dbReference type="FunFam" id="3.10.110.10:FF:000101">
    <property type="entry name" value="Ubiquitin-conjugating enzyme E2 D2"/>
    <property type="match status" value="1"/>
</dbReference>
<dbReference type="Gene3D" id="3.10.110.10">
    <property type="entry name" value="Ubiquitin Conjugating Enzyme"/>
    <property type="match status" value="1"/>
</dbReference>
<dbReference type="InterPro" id="IPR000608">
    <property type="entry name" value="UBQ-conjugat_E2_core"/>
</dbReference>
<dbReference type="InterPro" id="IPR023313">
    <property type="entry name" value="UBQ-conjugating_AS"/>
</dbReference>
<dbReference type="InterPro" id="IPR016135">
    <property type="entry name" value="UBQ-conjugating_enzyme/RWD"/>
</dbReference>
<dbReference type="PANTHER" id="PTHR24068">
    <property type="entry name" value="UBIQUITIN-CONJUGATING ENZYME E2"/>
    <property type="match status" value="1"/>
</dbReference>
<dbReference type="Pfam" id="PF00179">
    <property type="entry name" value="UQ_con"/>
    <property type="match status" value="1"/>
</dbReference>
<dbReference type="SMART" id="SM00212">
    <property type="entry name" value="UBCc"/>
    <property type="match status" value="1"/>
</dbReference>
<dbReference type="SUPFAM" id="SSF54495">
    <property type="entry name" value="UBC-like"/>
    <property type="match status" value="1"/>
</dbReference>
<dbReference type="PROSITE" id="PS00183">
    <property type="entry name" value="UBC_1"/>
    <property type="match status" value="1"/>
</dbReference>
<dbReference type="PROSITE" id="PS50127">
    <property type="entry name" value="UBC_2"/>
    <property type="match status" value="1"/>
</dbReference>
<name>UB2D3_PONAB</name>
<feature type="chain" id="PRO_0000271225" description="Ubiquitin-conjugating enzyme E2 D3">
    <location>
        <begin position="1"/>
        <end position="147"/>
    </location>
</feature>
<feature type="domain" description="UBC core" evidence="3">
    <location>
        <begin position="1"/>
        <end position="147"/>
    </location>
</feature>
<feature type="active site" description="Glycyl thioester intermediate" evidence="3 4">
    <location>
        <position position="85"/>
    </location>
</feature>
<feature type="disulfide bond" evidence="1">
    <location>
        <begin position="21"/>
        <end position="107"/>
    </location>
</feature>
<accession>Q5R4V7</accession>
<reference key="1">
    <citation type="submission" date="2004-11" db="EMBL/GenBank/DDBJ databases">
        <authorList>
            <consortium name="The German cDNA consortium"/>
        </authorList>
    </citation>
    <scope>NUCLEOTIDE SEQUENCE [LARGE SCALE MRNA]</scope>
    <source>
        <tissue>Brain cortex</tissue>
    </source>
</reference>
<comment type="function">
    <text evidence="1">Accepts ubiquitin from the E1 complex and catalyzes its covalent attachment to other proteins. In vitro catalyzes 'Lys-11'-, as well as 'Lys-48'-linked polyubiquitination. Cooperates with the E2 CDC34 and the SCF(FBXW11) E3 ligase complex for the polyubiquitination of NFKBIA leading to its subsequent proteasomal degradation. Acts as an initiator E2, priming the phosphorylated NFKBIA target at positions 'Lys-21' and/or 'Lys-22' with a monoubiquitin. Ubiquitin chain elongation is then performed by CDC34, building ubiquitin chains from the UBE2D3-primed NFKBIA-linked ubiquitin. Also acts as an initiator E2, in conjunction with RNF8, for the priming of PCNA. Monoubiquitination of PCNA, and its subsequent polyubiquitination, are essential events in the operation of the DNA damage tolerance (DDT) pathway that is activated after DNA damage caused by UV or chemical agents during S-phase. Associates with the BRCA1/BARD1 E3 ligase complex to perform ubiquitination at DNA damage sites following ionizing radiation leading to DNA repair. Targets DAPK3 for ubiquitination which influences promyelocytic leukemia protein nuclear body (PML-NB) formation in the nucleus. In conjunction with the MDM2 and TOPORS E3 ligases, functions ubiquitination of p53/TP53. In conjunction with the CBL E3 ligase, targets EGFR for polyubiquitination at the plasma membrane as well as during its internalization and transport on endosomes. In conjunction with the STUB1 E3 quality control E3 ligase, ubiquitinates unfolded proteins to catalyze their immediate destruction. Together with RNF135, catalyzes the viral RNA-dependent 'Lys-63'-linked polyubiquitination of RIGI to activate the downstream signaling pathway that leads to interferon beta production. Together with ZNF598, catalyzes ubiquitination of 40S ribosomal proteins in response to ribosome collisions. In cooperation with the GATOR2 complex, catalyzes 'Lys-6'-linked ubiquitination of NPRL2.</text>
</comment>
<comment type="catalytic activity">
    <reaction evidence="1 3 4">
        <text>S-ubiquitinyl-[E1 ubiquitin-activating enzyme]-L-cysteine + [E2 ubiquitin-conjugating enzyme]-L-cysteine = [E1 ubiquitin-activating enzyme]-L-cysteine + S-ubiquitinyl-[E2 ubiquitin-conjugating enzyme]-L-cysteine.</text>
        <dbReference type="EC" id="2.3.2.23"/>
    </reaction>
</comment>
<comment type="catalytic activity">
    <reaction evidence="1">
        <text>S-ubiquitinyl-[E1 ubiquitin-activating enzyme]-L-cysteine + [acceptor protein]-L-lysine = [E1 ubiquitin-activating enzyme]-L-cysteine + N(6)-monoubiquitinyl-[acceptor protein]-L-lysine.</text>
        <dbReference type="EC" id="2.3.2.24"/>
    </reaction>
</comment>
<comment type="pathway">
    <text evidence="3">Protein modification; protein ubiquitination.</text>
</comment>
<comment type="subunit">
    <text evidence="1">Interacts with SCF (SKP1-CUL1-F-box protein) E3 ubiquitin ligase complex; when Cullin is neddylated, the interaction between the E2 and the SCF complex is strengthened. Interacts with DAPK3. Interacts with BRCA1; the DNA damage checkpoint promotes the association with BRCA1 after ionizing radiation. Interacts non-covalently with ubiquitin. Interacts with E3 ubiquitin-protein ligase CBLC. Interacts with UBTD1 (By similarity). Interacts with RIGI and RNF135; involved in RIGI ubiquitination and activation (By similarity).</text>
</comment>
<comment type="subcellular location">
    <subcellularLocation>
        <location evidence="1">Cell membrane</location>
        <topology evidence="1">Peripheral membrane protein</topology>
    </subcellularLocation>
    <subcellularLocation>
        <location evidence="1">Endosome membrane</location>
        <topology evidence="1">Peripheral membrane protein</topology>
    </subcellularLocation>
</comment>
<comment type="PTM">
    <text evidence="2">Phosphorylated by AURKB.</text>
</comment>
<comment type="similarity">
    <text evidence="3">Belongs to the ubiquitin-conjugating enzyme family.</text>
</comment>
<sequence length="147" mass="16687">MALKRINKELSDLARDPPAQCSAGPVGDDMFHWQATIMGPNDSPYQGGVFFLTIHFPTDYPFKPPKVAFTTRIYHPNINSNGSICLDILRSQWSPALTISKVLLSICSLLCDPNPDDPLVPEIARIYKTDRDKYNRISREWTQKYAM</sequence>
<protein>
    <recommendedName>
        <fullName>Ubiquitin-conjugating enzyme E2 D3</fullName>
        <ecNumber>2.3.2.23</ecNumber>
    </recommendedName>
    <alternativeName>
        <fullName>(E3-independent) E2 ubiquitin-conjugating enzyme D3</fullName>
        <ecNumber>2.3.2.24</ecNumber>
    </alternativeName>
    <alternativeName>
        <fullName>E2 ubiquitin-conjugating enzyme D3</fullName>
    </alternativeName>
    <alternativeName>
        <fullName>Ubiquitin carrier protein D3</fullName>
    </alternativeName>
    <alternativeName>
        <fullName>Ubiquitin-protein ligase D3</fullName>
    </alternativeName>
</protein>
<gene>
    <name type="primary">UBE2D3</name>
</gene>
<evidence type="ECO:0000250" key="1">
    <source>
        <dbReference type="UniProtKB" id="P61077"/>
    </source>
</evidence>
<evidence type="ECO:0000250" key="2">
    <source>
        <dbReference type="UniProtKB" id="P61079"/>
    </source>
</evidence>
<evidence type="ECO:0000255" key="3">
    <source>
        <dbReference type="PROSITE-ProRule" id="PRU00388"/>
    </source>
</evidence>
<evidence type="ECO:0000255" key="4">
    <source>
        <dbReference type="PROSITE-ProRule" id="PRU10133"/>
    </source>
</evidence>